<sequence length="209" mass="23115">MAQRFKGRSLFLTALLCLASQGYAVGLGDMLERASQLSDKLHSLSTSLTNDLDTHFPPMGKILMPRPSMCHTASLQTPHDKDQALRVPESELLSIARALLLSWNDPLLLLASEAPTLSHPQNGAIYSKTRELQDQSNSLSSGLDRLIHKIGSSSKALSPLPLQGGDLGSDKNSRLINFYFLLSCFRRDSHKIDNFLKLLRCRAAKQDRC</sequence>
<name>PRL_ANGAN</name>
<feature type="signal peptide" evidence="1">
    <location>
        <begin position="1"/>
        <end position="24"/>
    </location>
</feature>
<feature type="chain" id="PRO_0000032930" description="Prolactin">
    <location>
        <begin position="25"/>
        <end position="209"/>
    </location>
</feature>
<feature type="disulfide bond" evidence="1">
    <location>
        <begin position="70"/>
        <end position="184"/>
    </location>
</feature>
<feature type="disulfide bond" evidence="1">
    <location>
        <begin position="201"/>
        <end position="209"/>
    </location>
</feature>
<keyword id="KW-1015">Disulfide bond</keyword>
<keyword id="KW-0372">Hormone</keyword>
<keyword id="KW-0964">Secreted</keyword>
<keyword id="KW-0732">Signal</keyword>
<evidence type="ECO:0000250" key="1"/>
<evidence type="ECO:0000305" key="2"/>
<reference key="1">
    <citation type="journal article" date="1994" name="Mol. Cell. Endocrinol.">
        <title>Sequence and regulation of European eel prolactin mRNA.</title>
        <authorList>
            <person name="Querat B."/>
            <person name="Cardinaud B."/>
            <person name="Hardy A."/>
            <person name="Vidal B."/>
            <person name="D'Angelo G."/>
        </authorList>
    </citation>
    <scope>NUCLEOTIDE SEQUENCE [MRNA]</scope>
    <source>
        <tissue>Pituitary</tissue>
    </source>
</reference>
<proteinExistence type="evidence at transcript level"/>
<protein>
    <recommendedName>
        <fullName>Prolactin</fullName>
        <shortName>PRL</shortName>
    </recommendedName>
</protein>
<accession>P33096</accession>
<gene>
    <name type="primary">prl</name>
</gene>
<dbReference type="EMBL" id="X69149">
    <property type="protein sequence ID" value="CAA48902.1"/>
    <property type="molecule type" value="mRNA"/>
</dbReference>
<dbReference type="PIR" id="I49983">
    <property type="entry name" value="S30541"/>
</dbReference>
<dbReference type="SMR" id="P33096"/>
<dbReference type="GO" id="GO:0005615">
    <property type="term" value="C:extracellular space"/>
    <property type="evidence" value="ECO:0007669"/>
    <property type="project" value="TreeGrafter"/>
</dbReference>
<dbReference type="GO" id="GO:0005179">
    <property type="term" value="F:hormone activity"/>
    <property type="evidence" value="ECO:0007669"/>
    <property type="project" value="UniProtKB-KW"/>
</dbReference>
<dbReference type="GO" id="GO:0008284">
    <property type="term" value="P:positive regulation of cell population proliferation"/>
    <property type="evidence" value="ECO:0007669"/>
    <property type="project" value="TreeGrafter"/>
</dbReference>
<dbReference type="GO" id="GO:0046427">
    <property type="term" value="P:positive regulation of receptor signaling pathway via JAK-STAT"/>
    <property type="evidence" value="ECO:0007669"/>
    <property type="project" value="TreeGrafter"/>
</dbReference>
<dbReference type="GO" id="GO:0031667">
    <property type="term" value="P:response to nutrient levels"/>
    <property type="evidence" value="ECO:0007669"/>
    <property type="project" value="TreeGrafter"/>
</dbReference>
<dbReference type="CDD" id="cd10288">
    <property type="entry name" value="prolactin_like"/>
    <property type="match status" value="1"/>
</dbReference>
<dbReference type="Gene3D" id="1.20.1250.10">
    <property type="match status" value="1"/>
</dbReference>
<dbReference type="InterPro" id="IPR009079">
    <property type="entry name" value="4_helix_cytokine-like_core"/>
</dbReference>
<dbReference type="InterPro" id="IPR001400">
    <property type="entry name" value="Somatotropin/Prolactin"/>
</dbReference>
<dbReference type="InterPro" id="IPR018116">
    <property type="entry name" value="Somatotropin_CS"/>
</dbReference>
<dbReference type="PANTHER" id="PTHR11417:SF5">
    <property type="entry name" value="PROLACTIN"/>
    <property type="match status" value="1"/>
</dbReference>
<dbReference type="PANTHER" id="PTHR11417">
    <property type="entry name" value="SOMATOTROPIN,PROLACTIN"/>
    <property type="match status" value="1"/>
</dbReference>
<dbReference type="Pfam" id="PF00103">
    <property type="entry name" value="Hormone_1"/>
    <property type="match status" value="1"/>
</dbReference>
<dbReference type="PRINTS" id="PR00836">
    <property type="entry name" value="SOMATOTROPIN"/>
</dbReference>
<dbReference type="SUPFAM" id="SSF47266">
    <property type="entry name" value="4-helical cytokines"/>
    <property type="match status" value="1"/>
</dbReference>
<dbReference type="PROSITE" id="PS00266">
    <property type="entry name" value="SOMATOTROPIN_1"/>
    <property type="match status" value="1"/>
</dbReference>
<dbReference type="PROSITE" id="PS00338">
    <property type="entry name" value="SOMATOTROPIN_2"/>
    <property type="match status" value="1"/>
</dbReference>
<organism>
    <name type="scientific">Anguilla anguilla</name>
    <name type="common">European freshwater eel</name>
    <name type="synonym">Muraena anguilla</name>
    <dbReference type="NCBI Taxonomy" id="7936"/>
    <lineage>
        <taxon>Eukaryota</taxon>
        <taxon>Metazoa</taxon>
        <taxon>Chordata</taxon>
        <taxon>Craniata</taxon>
        <taxon>Vertebrata</taxon>
        <taxon>Euteleostomi</taxon>
        <taxon>Actinopterygii</taxon>
        <taxon>Neopterygii</taxon>
        <taxon>Teleostei</taxon>
        <taxon>Anguilliformes</taxon>
        <taxon>Anguillidae</taxon>
        <taxon>Anguilla</taxon>
    </lineage>
</organism>
<comment type="subcellular location">
    <subcellularLocation>
        <location>Secreted</location>
    </subcellularLocation>
</comment>
<comment type="similarity">
    <text evidence="2">Belongs to the somatotropin/prolactin family.</text>
</comment>